<gene>
    <name type="ordered locus">HI_1273</name>
</gene>
<organism>
    <name type="scientific">Haemophilus influenzae (strain ATCC 51907 / DSM 11121 / KW20 / Rd)</name>
    <dbReference type="NCBI Taxonomy" id="71421"/>
    <lineage>
        <taxon>Bacteria</taxon>
        <taxon>Pseudomonadati</taxon>
        <taxon>Pseudomonadota</taxon>
        <taxon>Gammaproteobacteria</taxon>
        <taxon>Pasteurellales</taxon>
        <taxon>Pasteurellaceae</taxon>
        <taxon>Haemophilus</taxon>
    </lineage>
</organism>
<dbReference type="EMBL" id="L42023">
    <property type="protein sequence ID" value="AAC22921.1"/>
    <property type="molecule type" value="Genomic_DNA"/>
</dbReference>
<dbReference type="PIR" id="F64024">
    <property type="entry name" value="F64024"/>
</dbReference>
<dbReference type="RefSeq" id="NP_439426.1">
    <property type="nucleotide sequence ID" value="NC_000907.1"/>
</dbReference>
<dbReference type="STRING" id="71421.HI_1273"/>
<dbReference type="EnsemblBacteria" id="AAC22921">
    <property type="protein sequence ID" value="AAC22921"/>
    <property type="gene ID" value="HI_1273"/>
</dbReference>
<dbReference type="KEGG" id="hin:HI_1273"/>
<dbReference type="PATRIC" id="fig|71421.8.peg.1324"/>
<dbReference type="eggNOG" id="COG0500">
    <property type="taxonomic scope" value="Bacteria"/>
</dbReference>
<dbReference type="HOGENOM" id="CLU_060275_0_1_6"/>
<dbReference type="OrthoDB" id="9795085at2"/>
<dbReference type="PhylomeDB" id="P44150"/>
<dbReference type="BioCyc" id="HINF71421:G1GJ1-1298-MONOMER"/>
<dbReference type="Proteomes" id="UP000000579">
    <property type="component" value="Chromosome"/>
</dbReference>
<dbReference type="CDD" id="cd02440">
    <property type="entry name" value="AdoMet_MTases"/>
    <property type="match status" value="1"/>
</dbReference>
<dbReference type="Gene3D" id="3.40.50.150">
    <property type="entry name" value="Vaccinia Virus protein VP39"/>
    <property type="match status" value="1"/>
</dbReference>
<dbReference type="InterPro" id="IPR050723">
    <property type="entry name" value="CFA/CMAS"/>
</dbReference>
<dbReference type="InterPro" id="IPR041698">
    <property type="entry name" value="Methyltransf_25"/>
</dbReference>
<dbReference type="InterPro" id="IPR029063">
    <property type="entry name" value="SAM-dependent_MTases_sf"/>
</dbReference>
<dbReference type="PANTHER" id="PTHR43667">
    <property type="entry name" value="CYCLOPROPANE-FATTY-ACYL-PHOSPHOLIPID SYNTHASE"/>
    <property type="match status" value="1"/>
</dbReference>
<dbReference type="PANTHER" id="PTHR43667:SF2">
    <property type="entry name" value="FATTY ACID C-METHYL TRANSFERASE"/>
    <property type="match status" value="1"/>
</dbReference>
<dbReference type="Pfam" id="PF13649">
    <property type="entry name" value="Methyltransf_25"/>
    <property type="match status" value="1"/>
</dbReference>
<dbReference type="SUPFAM" id="SSF53335">
    <property type="entry name" value="S-adenosyl-L-methionine-dependent methyltransferases"/>
    <property type="match status" value="1"/>
</dbReference>
<sequence length="268" mass="30511">MTIYDINFAELYQQHLIACNHYNLPPIKWDKKAVKMAENLVGKPSAYNQQLLQAMNVQTDEAVLDIGCGPGTFAVPLAQQGSTVYALDYSNGMLDCLAQFKQKFGLHHLTTFHKSWADNWDDVPQADVVLASRSTLVDDLDDMIEKLCAKAKKRVFLTSVTQRHFLDEGVFEAIGREDIGFPTYIYLLNRLYQKGIQANLNFIETESGCFQGESYEDLLASVEFSLGELSEKEKQGLKAFYDRKQANNEPISHGQKKWALIWWNVDRI</sequence>
<keyword id="KW-1185">Reference proteome</keyword>
<name>Y1273_HAEIN</name>
<reference key="1">
    <citation type="journal article" date="1995" name="Science">
        <title>Whole-genome random sequencing and assembly of Haemophilus influenzae Rd.</title>
        <authorList>
            <person name="Fleischmann R.D."/>
            <person name="Adams M.D."/>
            <person name="White O."/>
            <person name="Clayton R.A."/>
            <person name="Kirkness E.F."/>
            <person name="Kerlavage A.R."/>
            <person name="Bult C.J."/>
            <person name="Tomb J.-F."/>
            <person name="Dougherty B.A."/>
            <person name="Merrick J.M."/>
            <person name="McKenney K."/>
            <person name="Sutton G.G."/>
            <person name="FitzHugh W."/>
            <person name="Fields C.A."/>
            <person name="Gocayne J.D."/>
            <person name="Scott J.D."/>
            <person name="Shirley R."/>
            <person name="Liu L.-I."/>
            <person name="Glodek A."/>
            <person name="Kelley J.M."/>
            <person name="Weidman J.F."/>
            <person name="Phillips C.A."/>
            <person name="Spriggs T."/>
            <person name="Hedblom E."/>
            <person name="Cotton M.D."/>
            <person name="Utterback T.R."/>
            <person name="Hanna M.C."/>
            <person name="Nguyen D.T."/>
            <person name="Saudek D.M."/>
            <person name="Brandon R.C."/>
            <person name="Fine L.D."/>
            <person name="Fritchman J.L."/>
            <person name="Fuhrmann J.L."/>
            <person name="Geoghagen N.S.M."/>
            <person name="Gnehm C.L."/>
            <person name="McDonald L.A."/>
            <person name="Small K.V."/>
            <person name="Fraser C.M."/>
            <person name="Smith H.O."/>
            <person name="Venter J.C."/>
        </authorList>
    </citation>
    <scope>NUCLEOTIDE SEQUENCE [LARGE SCALE GENOMIC DNA]</scope>
    <source>
        <strain>ATCC 51907 / DSM 11121 / KW20 / Rd</strain>
    </source>
</reference>
<accession>P44150</accession>
<proteinExistence type="predicted"/>
<protein>
    <recommendedName>
        <fullName>Uncharacterized protein HI_1273</fullName>
    </recommendedName>
</protein>
<feature type="chain" id="PRO_0000078020" description="Uncharacterized protein HI_1273">
    <location>
        <begin position="1"/>
        <end position="268"/>
    </location>
</feature>